<organism>
    <name type="scientific">Lumbricus terrestris</name>
    <name type="common">Common earthworm</name>
    <dbReference type="NCBI Taxonomy" id="6398"/>
    <lineage>
        <taxon>Eukaryota</taxon>
        <taxon>Metazoa</taxon>
        <taxon>Spiralia</taxon>
        <taxon>Lophotrochozoa</taxon>
        <taxon>Annelida</taxon>
        <taxon>Clitellata</taxon>
        <taxon>Oligochaeta</taxon>
        <taxon>Crassiclitellata</taxon>
        <taxon>Lumbricina</taxon>
        <taxon>Lumbricidae</taxon>
        <taxon>Lumbricinae</taxon>
        <taxon>Lumbricus</taxon>
    </lineage>
</organism>
<protein>
    <recommendedName>
        <fullName>Gelsolin-like protein 2</fullName>
    </recommendedName>
    <alternativeName>
        <fullName evidence="6 7">Actin-modulator</fullName>
        <shortName evidence="6 7">EWAM-P2</shortName>
    </alternativeName>
</protein>
<proteinExistence type="evidence at protein level"/>
<dbReference type="EMBL" id="AJ504727">
    <property type="protein sequence ID" value="CAD43405.1"/>
    <property type="molecule type" value="mRNA"/>
</dbReference>
<dbReference type="SMR" id="Q8MPM1"/>
<dbReference type="GO" id="GO:0015629">
    <property type="term" value="C:actin cytoskeleton"/>
    <property type="evidence" value="ECO:0007669"/>
    <property type="project" value="TreeGrafter"/>
</dbReference>
<dbReference type="GO" id="GO:0005737">
    <property type="term" value="C:cytoplasm"/>
    <property type="evidence" value="ECO:0007669"/>
    <property type="project" value="UniProtKB-KW"/>
</dbReference>
<dbReference type="GO" id="GO:0051015">
    <property type="term" value="F:actin filament binding"/>
    <property type="evidence" value="ECO:0007669"/>
    <property type="project" value="InterPro"/>
</dbReference>
<dbReference type="GO" id="GO:0051693">
    <property type="term" value="P:actin filament capping"/>
    <property type="evidence" value="ECO:0007669"/>
    <property type="project" value="UniProtKB-KW"/>
</dbReference>
<dbReference type="GO" id="GO:0008154">
    <property type="term" value="P:actin polymerization or depolymerization"/>
    <property type="evidence" value="ECO:0007669"/>
    <property type="project" value="TreeGrafter"/>
</dbReference>
<dbReference type="CDD" id="cd11290">
    <property type="entry name" value="gelsolin_S1_like"/>
    <property type="match status" value="1"/>
</dbReference>
<dbReference type="CDD" id="cd11289">
    <property type="entry name" value="gelsolin_S2_like"/>
    <property type="match status" value="1"/>
</dbReference>
<dbReference type="CDD" id="cd11292">
    <property type="entry name" value="gelsolin_S3_like"/>
    <property type="match status" value="1"/>
</dbReference>
<dbReference type="FunFam" id="3.40.20.10:FF:000043">
    <property type="entry name" value="macrophage-capping protein-like isoform X2"/>
    <property type="match status" value="1"/>
</dbReference>
<dbReference type="Gene3D" id="3.40.20.10">
    <property type="entry name" value="Severin"/>
    <property type="match status" value="3"/>
</dbReference>
<dbReference type="InterPro" id="IPR029006">
    <property type="entry name" value="ADF-H/Gelsolin-like_dom_sf"/>
</dbReference>
<dbReference type="InterPro" id="IPR007123">
    <property type="entry name" value="Gelsolin-like_dom"/>
</dbReference>
<dbReference type="InterPro" id="IPR036180">
    <property type="entry name" value="Gelsolin-like_dom_sf"/>
</dbReference>
<dbReference type="InterPro" id="IPR007122">
    <property type="entry name" value="Villin/Gelsolin"/>
</dbReference>
<dbReference type="PANTHER" id="PTHR11977:SF130">
    <property type="entry name" value="SEVERIN"/>
    <property type="match status" value="1"/>
</dbReference>
<dbReference type="PANTHER" id="PTHR11977">
    <property type="entry name" value="VILLIN"/>
    <property type="match status" value="1"/>
</dbReference>
<dbReference type="Pfam" id="PF00626">
    <property type="entry name" value="Gelsolin"/>
    <property type="match status" value="3"/>
</dbReference>
<dbReference type="PRINTS" id="PR00597">
    <property type="entry name" value="GELSOLIN"/>
</dbReference>
<dbReference type="SMART" id="SM00262">
    <property type="entry name" value="GEL"/>
    <property type="match status" value="3"/>
</dbReference>
<dbReference type="SUPFAM" id="SSF55753">
    <property type="entry name" value="Actin depolymerizing proteins"/>
    <property type="match status" value="2"/>
</dbReference>
<dbReference type="SUPFAM" id="SSF82754">
    <property type="entry name" value="C-terminal, gelsolin-like domain of Sec23/24"/>
    <property type="match status" value="1"/>
</dbReference>
<reference evidence="9" key="1">
    <citation type="thesis" date="2001" institute="Heinrich-Heine Universitaet Duesseldorf" country="Germany">
        <title>Isoforms of the gelsolin-related protein of the earthworm Lumbricus terrestris.</title>
        <authorList>
            <person name="Krueger E.M.I."/>
        </authorList>
    </citation>
    <scope>NUCLEOTIDE SEQUENCE [MRNA]</scope>
    <source>
        <tissue evidence="9">Muscle</tissue>
    </source>
</reference>
<reference evidence="8" key="2">
    <citation type="journal article" date="1987" name="J. Comp. Physiol. B">
        <title>Isolation and characterization of a Ca(2+)-activated actin-modulating protein from obliquely striated muscle.</title>
        <authorList>
            <person name="D'Haese J."/>
            <person name="Hinssen H."/>
        </authorList>
    </citation>
    <scope>FUNCTION</scope>
    <scope>INTERACTION WITH ACTIN</scope>
</reference>
<reference evidence="8" key="3">
    <citation type="journal article" date="2008" name="Cell Tissue Res.">
        <title>Involvement of a gelsolin-related protein in spermatogenesis of the earthworm Lumbricus terrestris.</title>
        <authorList>
            <person name="Kruger E."/>
            <person name="Hinssen H."/>
            <person name="D'Haese J."/>
        </authorList>
    </citation>
    <scope>TISSUE SPECIFICITY</scope>
</reference>
<reference evidence="8" key="4">
    <citation type="book" date="2001" name="Abstracts of the XXVI European Muscle Conference, J. Muscle Res. Cell Motil.">
        <title>Two distinct isoforms of the gelsolin-related protein of the annelid Lumbricus terrestris: characterization by sequence analysis and localization in various muscle tissues.</title>
        <authorList>
            <person name="Kruger E."/>
            <person name="Giebing T."/>
            <person name="Hinssen H."/>
            <person name="Fey M."/>
            <person name="D'Haese J."/>
        </authorList>
    </citation>
    <scope>TISSUE SPECIFICITY</scope>
</reference>
<gene>
    <name evidence="9" type="primary">gelsolin</name>
</gene>
<feature type="chain" id="PRO_0000390386" description="Gelsolin-like protein 2">
    <location>
        <begin position="1"/>
        <end position="366"/>
    </location>
</feature>
<feature type="repeat" description="Gelsolin-like 1" evidence="2">
    <location>
        <begin position="55"/>
        <end position="139"/>
    </location>
</feature>
<feature type="repeat" description="Gelsolin-like 2" evidence="2">
    <location>
        <begin position="177"/>
        <end position="252"/>
    </location>
</feature>
<feature type="repeat" description="Gelsolin-like 3" evidence="2">
    <location>
        <begin position="286"/>
        <end position="327"/>
    </location>
</feature>
<feature type="region of interest" description="Actin binding" evidence="1">
    <location>
        <begin position="100"/>
        <end position="116"/>
    </location>
</feature>
<feature type="region of interest" description="Actin-actin interfilament contact point" evidence="1">
    <location>
        <begin position="104"/>
        <end position="107"/>
    </location>
</feature>
<sequence length="366" mass="40968">MSGLVKAKRYDWKDSNLAMFGSALDKSVKKESALKEAAWKGVGEKVGLKIWRIVNFKVTEWPEKDYGSFFSGDSYIILNTYKLKGREELAYDVHFWIGSKSTQDEYCVAAYKTVELDAYLDDAAIQHRDAEGNESDLFLSYFENGLTIMEGGAEMGFNNVKPEEYKARLLHFSGLKKHIVVKEVPLCPQRLKSDDVFILDLGRTLYQWNGTGSNKDERFKAMQYLQNLKAERGAATSKTLEEEHIDKSHEFYTSLTGEDEDLPEDQTDSAAVKTLLRVSDAAGHFKSTVVKTGHIAASDLDSKDVFILDNGSTCFVWVGNGASAQEKRNGLGYAHSHLMKTPHPLIPILRHQRGQASKCFNAALAA</sequence>
<evidence type="ECO:0000250" key="1">
    <source>
        <dbReference type="UniProtKB" id="P06396"/>
    </source>
</evidence>
<evidence type="ECO:0000255" key="2"/>
<evidence type="ECO:0000269" key="3">
    <source>
    </source>
</evidence>
<evidence type="ECO:0000269" key="4">
    <source ref="2"/>
</evidence>
<evidence type="ECO:0000269" key="5">
    <source ref="4"/>
</evidence>
<evidence type="ECO:0000303" key="6">
    <source>
    </source>
</evidence>
<evidence type="ECO:0000303" key="7">
    <source ref="2"/>
</evidence>
<evidence type="ECO:0000305" key="8"/>
<evidence type="ECO:0000312" key="9">
    <source>
        <dbReference type="EMBL" id="CAD43405.1"/>
    </source>
</evidence>
<name>GELS2_LUMTE</name>
<accession>Q8MPM1</accession>
<comment type="function">
    <text evidence="4">Calcium-regulated protein that binds to the plus (or barbed) ends of actin monomers or filaments, preventing monomer exchange (end-blocking or capping). Can promote the assembly of monomers into filaments (nucleation) as well as sever existing filaments.</text>
</comment>
<comment type="subunit">
    <text evidence="4">Interacts with actin monomers and filaments.</text>
</comment>
<comment type="subcellular location">
    <subcellularLocation>
        <location evidence="1">Cytoplasm</location>
        <location evidence="1">Cytoskeleton</location>
    </subcellularLocation>
</comment>
<comment type="tissue specificity">
    <text evidence="3 5">Expressed in circular and longitudinal muscle, pseudohearts, pharynx and gizzard. Not expressed in seminal vesicles.</text>
</comment>
<comment type="similarity">
    <text evidence="2">Belongs to the villin/gelsolin family.</text>
</comment>
<keyword id="KW-0117">Actin capping</keyword>
<keyword id="KW-0009">Actin-binding</keyword>
<keyword id="KW-0106">Calcium</keyword>
<keyword id="KW-0963">Cytoplasm</keyword>
<keyword id="KW-0206">Cytoskeleton</keyword>
<keyword id="KW-0677">Repeat</keyword>